<dbReference type="EMBL" id="CU329670">
    <property type="protein sequence ID" value="CAA22445.1"/>
    <property type="molecule type" value="Genomic_DNA"/>
</dbReference>
<dbReference type="PIR" id="T38582">
    <property type="entry name" value="T38582"/>
</dbReference>
<dbReference type="RefSeq" id="NP_594923.1">
    <property type="nucleotide sequence ID" value="NM_001020355.2"/>
</dbReference>
<dbReference type="BioGRID" id="278160">
    <property type="interactions" value="28"/>
</dbReference>
<dbReference type="FunCoup" id="O94392">
    <property type="interactions" value="278"/>
</dbReference>
<dbReference type="STRING" id="284812.O94392"/>
<dbReference type="PaxDb" id="4896-SPAC2H10.01.1"/>
<dbReference type="EnsemblFungi" id="SPAC2H10.01.1">
    <property type="protein sequence ID" value="SPAC2H10.01.1:pep"/>
    <property type="gene ID" value="SPAC2H10.01"/>
</dbReference>
<dbReference type="KEGG" id="spo:2541664"/>
<dbReference type="PomBase" id="SPAC2H10.01"/>
<dbReference type="VEuPathDB" id="FungiDB:SPAC2H10.01"/>
<dbReference type="HOGENOM" id="CLU_529087_0_0_1"/>
<dbReference type="InParanoid" id="O94392"/>
<dbReference type="OMA" id="ACQKAHA"/>
<dbReference type="PRO" id="PR:O94392"/>
<dbReference type="Proteomes" id="UP000002485">
    <property type="component" value="Chromosome I"/>
</dbReference>
<dbReference type="GO" id="GO:0005829">
    <property type="term" value="C:cytosol"/>
    <property type="evidence" value="ECO:0007005"/>
    <property type="project" value="PomBase"/>
</dbReference>
<dbReference type="GO" id="GO:0005634">
    <property type="term" value="C:nucleus"/>
    <property type="evidence" value="ECO:0007005"/>
    <property type="project" value="PomBase"/>
</dbReference>
<dbReference type="GO" id="GO:0000981">
    <property type="term" value="F:DNA-binding transcription factor activity, RNA polymerase II-specific"/>
    <property type="evidence" value="ECO:0000255"/>
    <property type="project" value="PomBase"/>
</dbReference>
<dbReference type="GO" id="GO:0000978">
    <property type="term" value="F:RNA polymerase II cis-regulatory region sequence-specific DNA binding"/>
    <property type="evidence" value="ECO:0000255"/>
    <property type="project" value="PomBase"/>
</dbReference>
<dbReference type="GO" id="GO:0008270">
    <property type="term" value="F:zinc ion binding"/>
    <property type="evidence" value="ECO:0000255"/>
    <property type="project" value="PomBase"/>
</dbReference>
<dbReference type="GO" id="GO:0006357">
    <property type="term" value="P:regulation of transcription by RNA polymerase II"/>
    <property type="evidence" value="ECO:0000255"/>
    <property type="project" value="PomBase"/>
</dbReference>
<dbReference type="CDD" id="cd00067">
    <property type="entry name" value="GAL4"/>
    <property type="match status" value="1"/>
</dbReference>
<dbReference type="Gene3D" id="4.10.240.10">
    <property type="entry name" value="Zn(2)-C6 fungal-type DNA-binding domain"/>
    <property type="match status" value="1"/>
</dbReference>
<dbReference type="InterPro" id="IPR036864">
    <property type="entry name" value="Zn2-C6_fun-type_DNA-bd_sf"/>
</dbReference>
<dbReference type="InterPro" id="IPR001138">
    <property type="entry name" value="Zn2Cys6_DnaBD"/>
</dbReference>
<dbReference type="Pfam" id="PF00172">
    <property type="entry name" value="Zn_clus"/>
    <property type="match status" value="1"/>
</dbReference>
<dbReference type="SMART" id="SM00066">
    <property type="entry name" value="GAL4"/>
    <property type="match status" value="1"/>
</dbReference>
<dbReference type="SUPFAM" id="SSF57701">
    <property type="entry name" value="Zn2/Cys6 DNA-binding domain"/>
    <property type="match status" value="1"/>
</dbReference>
<dbReference type="PROSITE" id="PS00463">
    <property type="entry name" value="ZN2_CY6_FUNGAL_1"/>
    <property type="match status" value="1"/>
</dbReference>
<dbReference type="PROSITE" id="PS50048">
    <property type="entry name" value="ZN2_CY6_FUNGAL_2"/>
    <property type="match status" value="1"/>
</dbReference>
<reference key="1">
    <citation type="journal article" date="2002" name="Nature">
        <title>The genome sequence of Schizosaccharomyces pombe.</title>
        <authorList>
            <person name="Wood V."/>
            <person name="Gwilliam R."/>
            <person name="Rajandream M.A."/>
            <person name="Lyne M.H."/>
            <person name="Lyne R."/>
            <person name="Stewart A."/>
            <person name="Sgouros J.G."/>
            <person name="Peat N."/>
            <person name="Hayles J."/>
            <person name="Baker S.G."/>
            <person name="Basham D."/>
            <person name="Bowman S."/>
            <person name="Brooks K."/>
            <person name="Brown D."/>
            <person name="Brown S."/>
            <person name="Chillingworth T."/>
            <person name="Churcher C.M."/>
            <person name="Collins M."/>
            <person name="Connor R."/>
            <person name="Cronin A."/>
            <person name="Davis P."/>
            <person name="Feltwell T."/>
            <person name="Fraser A."/>
            <person name="Gentles S."/>
            <person name="Goble A."/>
            <person name="Hamlin N."/>
            <person name="Harris D.E."/>
            <person name="Hidalgo J."/>
            <person name="Hodgson G."/>
            <person name="Holroyd S."/>
            <person name="Hornsby T."/>
            <person name="Howarth S."/>
            <person name="Huckle E.J."/>
            <person name="Hunt S."/>
            <person name="Jagels K."/>
            <person name="James K.D."/>
            <person name="Jones L."/>
            <person name="Jones M."/>
            <person name="Leather S."/>
            <person name="McDonald S."/>
            <person name="McLean J."/>
            <person name="Mooney P."/>
            <person name="Moule S."/>
            <person name="Mungall K.L."/>
            <person name="Murphy L.D."/>
            <person name="Niblett D."/>
            <person name="Odell C."/>
            <person name="Oliver K."/>
            <person name="O'Neil S."/>
            <person name="Pearson D."/>
            <person name="Quail M.A."/>
            <person name="Rabbinowitsch E."/>
            <person name="Rutherford K.M."/>
            <person name="Rutter S."/>
            <person name="Saunders D."/>
            <person name="Seeger K."/>
            <person name="Sharp S."/>
            <person name="Skelton J."/>
            <person name="Simmonds M.N."/>
            <person name="Squares R."/>
            <person name="Squares S."/>
            <person name="Stevens K."/>
            <person name="Taylor K."/>
            <person name="Taylor R.G."/>
            <person name="Tivey A."/>
            <person name="Walsh S.V."/>
            <person name="Warren T."/>
            <person name="Whitehead S."/>
            <person name="Woodward J.R."/>
            <person name="Volckaert G."/>
            <person name="Aert R."/>
            <person name="Robben J."/>
            <person name="Grymonprez B."/>
            <person name="Weltjens I."/>
            <person name="Vanstreels E."/>
            <person name="Rieger M."/>
            <person name="Schaefer M."/>
            <person name="Mueller-Auer S."/>
            <person name="Gabel C."/>
            <person name="Fuchs M."/>
            <person name="Duesterhoeft A."/>
            <person name="Fritzc C."/>
            <person name="Holzer E."/>
            <person name="Moestl D."/>
            <person name="Hilbert H."/>
            <person name="Borzym K."/>
            <person name="Langer I."/>
            <person name="Beck A."/>
            <person name="Lehrach H."/>
            <person name="Reinhardt R."/>
            <person name="Pohl T.M."/>
            <person name="Eger P."/>
            <person name="Zimmermann W."/>
            <person name="Wedler H."/>
            <person name="Wambutt R."/>
            <person name="Purnelle B."/>
            <person name="Goffeau A."/>
            <person name="Cadieu E."/>
            <person name="Dreano S."/>
            <person name="Gloux S."/>
            <person name="Lelaure V."/>
            <person name="Mottier S."/>
            <person name="Galibert F."/>
            <person name="Aves S.J."/>
            <person name="Xiang Z."/>
            <person name="Hunt C."/>
            <person name="Moore K."/>
            <person name="Hurst S.M."/>
            <person name="Lucas M."/>
            <person name="Rochet M."/>
            <person name="Gaillardin C."/>
            <person name="Tallada V.A."/>
            <person name="Garzon A."/>
            <person name="Thode G."/>
            <person name="Daga R.R."/>
            <person name="Cruzado L."/>
            <person name="Jimenez J."/>
            <person name="Sanchez M."/>
            <person name="del Rey F."/>
            <person name="Benito J."/>
            <person name="Dominguez A."/>
            <person name="Revuelta J.L."/>
            <person name="Moreno S."/>
            <person name="Armstrong J."/>
            <person name="Forsburg S.L."/>
            <person name="Cerutti L."/>
            <person name="Lowe T."/>
            <person name="McCombie W.R."/>
            <person name="Paulsen I."/>
            <person name="Potashkin J."/>
            <person name="Shpakovski G.V."/>
            <person name="Ussery D."/>
            <person name="Barrell B.G."/>
            <person name="Nurse P."/>
        </authorList>
    </citation>
    <scope>NUCLEOTIDE SEQUENCE [LARGE SCALE GENOMIC DNA]</scope>
    <source>
        <strain>972 / ATCC 24843</strain>
    </source>
</reference>
<reference key="2">
    <citation type="journal article" date="2006" name="Nat. Biotechnol.">
        <title>ORFeome cloning and global analysis of protein localization in the fission yeast Schizosaccharomyces pombe.</title>
        <authorList>
            <person name="Matsuyama A."/>
            <person name="Arai R."/>
            <person name="Yashiroda Y."/>
            <person name="Shirai A."/>
            <person name="Kamata A."/>
            <person name="Sekido S."/>
            <person name="Kobayashi Y."/>
            <person name="Hashimoto A."/>
            <person name="Hamamoto M."/>
            <person name="Hiraoka Y."/>
            <person name="Horinouchi S."/>
            <person name="Yoshida M."/>
        </authorList>
    </citation>
    <scope>SUBCELLULAR LOCATION [LARGE SCALE ANALYSIS]</scope>
</reference>
<comment type="subcellular location">
    <subcellularLocation>
        <location evidence="3">Cytoplasm</location>
    </subcellularLocation>
    <subcellularLocation>
        <location evidence="1 3">Nucleus</location>
    </subcellularLocation>
</comment>
<feature type="chain" id="PRO_0000310390" description="Uncharacterized transcriptional regulatory protein C2H10.01">
    <location>
        <begin position="1"/>
        <end position="480"/>
    </location>
</feature>
<feature type="DNA-binding region" description="Zn(2)-C6 fungal-type" evidence="1">
    <location>
        <begin position="16"/>
        <end position="46"/>
    </location>
</feature>
<feature type="region of interest" description="Disordered" evidence="2">
    <location>
        <begin position="298"/>
        <end position="325"/>
    </location>
</feature>
<feature type="compositionally biased region" description="Low complexity" evidence="2">
    <location>
        <begin position="298"/>
        <end position="307"/>
    </location>
</feature>
<feature type="compositionally biased region" description="Polar residues" evidence="2">
    <location>
        <begin position="308"/>
        <end position="325"/>
    </location>
</feature>
<proteinExistence type="inferred from homology"/>
<accession>O94392</accession>
<name>YLV1_SCHPO</name>
<sequence>MTQKNTGPRRRTAVACDRCRRRKIRCTGSDIPGQPCLACQKAHADCHFSTTSWRACRKKSAPLHCPSTNGKTNVLPSYASTPSLSPMTSSHFPYASDGTLISATNHCDDCSYNPHYLPVNSNGSSPSHTSSLDSIPGYASGSGPFKTPYRPVAVSESSSRSSFSMGSSEFASSTWSQSPMQSSLYVSPSSQPLDRFSPASFPSKETLTSSSLSSSVPRSVSLSNFADSNTSNYPESSLLPAAKVGNNGFVGSNVLGSMSYSNVEDSVRFQTDSVSQMSSKSLEHLPMLSEMTLSSSASFGASVSPKSTPGSNSTGAAVDTNSVHSNGGSDLDYSSYLTDSSAVDSPSLDADEVLRSFNLANDPIGAVDPLTLEIDQGSGSQLLGQQSFANDSLNAKQSSGKLGPLPPQSFNSSDYISFDEPSRYLSDDASLWPDQYVDKVQPLATMKTCNPAVFSSNTSLDDMFFFIRDFDEDHPIQTAY</sequence>
<organism>
    <name type="scientific">Schizosaccharomyces pombe (strain 972 / ATCC 24843)</name>
    <name type="common">Fission yeast</name>
    <dbReference type="NCBI Taxonomy" id="284812"/>
    <lineage>
        <taxon>Eukaryota</taxon>
        <taxon>Fungi</taxon>
        <taxon>Dikarya</taxon>
        <taxon>Ascomycota</taxon>
        <taxon>Taphrinomycotina</taxon>
        <taxon>Schizosaccharomycetes</taxon>
        <taxon>Schizosaccharomycetales</taxon>
        <taxon>Schizosaccharomycetaceae</taxon>
        <taxon>Schizosaccharomyces</taxon>
    </lineage>
</organism>
<keyword id="KW-0963">Cytoplasm</keyword>
<keyword id="KW-0238">DNA-binding</keyword>
<keyword id="KW-0479">Metal-binding</keyword>
<keyword id="KW-0539">Nucleus</keyword>
<keyword id="KW-1185">Reference proteome</keyword>
<keyword id="KW-0804">Transcription</keyword>
<keyword id="KW-0805">Transcription regulation</keyword>
<keyword id="KW-0862">Zinc</keyword>
<protein>
    <recommendedName>
        <fullName>Uncharacterized transcriptional regulatory protein C2H10.01</fullName>
    </recommendedName>
</protein>
<gene>
    <name type="ORF">SPAC2H10.01</name>
</gene>
<evidence type="ECO:0000255" key="1">
    <source>
        <dbReference type="PROSITE-ProRule" id="PRU00227"/>
    </source>
</evidence>
<evidence type="ECO:0000256" key="2">
    <source>
        <dbReference type="SAM" id="MobiDB-lite"/>
    </source>
</evidence>
<evidence type="ECO:0000269" key="3">
    <source>
    </source>
</evidence>